<comment type="function">
    <text evidence="1 4">Lectin that binds beta-galactoside and a wide array of complex carbohydrates (PubMed:21210196). Plays a role in regulating apoptosis, cell proliferation and cell differentiation. Inhibits CD45 protein phosphatase activity and therefore the dephosphorylation of Lyn kinase. Strong inducer of T-cell apoptosis. Has hemagglutinating activity towards human erythrocytes (PubMed:21210196).</text>
</comment>
<comment type="biophysicochemical properties">
    <phDependence>
        <text evidence="4">Optimum pH for hemagglutinating activity is 7.4.</text>
    </phDependence>
    <temperatureDependence>
        <text evidence="4">Retains hemagglutinating activity up to 42 degrees Celsius. The activity then drops and is completely lost at 65 degrees Celsius.</text>
    </temperatureDependence>
</comment>
<comment type="subunit">
    <text evidence="1">Homodimer. Binds LGALS3BP. Interacts with CD2, CD3, CD4, CD6, CD7, CD43, ALCAM and CD45. Interacts with laminin (via poly-N-acetyllactosamine). Interacts with SUSD2. Interacts with cargo receptor TMED10; the interaction mediates the translocation from the cytoplasm into the ERGIC (endoplasmic reticulum-Golgi intermediate compartment) and thereby secretion.</text>
</comment>
<comment type="subcellular location">
    <subcellularLocation>
        <location evidence="1">Secreted</location>
        <location evidence="1">Extracellular space</location>
        <location evidence="1">Extracellular matrix</location>
    </subcellularLocation>
    <subcellularLocation>
        <location evidence="1">Cytoplasm</location>
    </subcellularLocation>
    <subcellularLocation>
        <location evidence="1">Secreted</location>
    </subcellularLocation>
    <text evidence="1">Can be secreted; the secretion is dependent on protein unfolding and facilitated by the cargo receptor TMED10; it results in protein translocation from the cytoplasm into the ERGIC (endoplasmic reticulum-Golgi intermediate compartment) followed by vesicle entry and secretion.</text>
</comment>
<name>LEG1_CAPHI</name>
<keyword id="KW-0007">Acetylation</keyword>
<keyword id="KW-0053">Apoptosis</keyword>
<keyword id="KW-0963">Cytoplasm</keyword>
<keyword id="KW-0903">Direct protein sequencing</keyword>
<keyword id="KW-0272">Extracellular matrix</keyword>
<keyword id="KW-0348">Hemagglutinin</keyword>
<keyword id="KW-0430">Lectin</keyword>
<keyword id="KW-0597">Phosphoprotein</keyword>
<keyword id="KW-1185">Reference proteome</keyword>
<keyword id="KW-0964">Secreted</keyword>
<dbReference type="SMR" id="C0HJR3"/>
<dbReference type="STRING" id="9925.ENSCHIP00000013044"/>
<dbReference type="Proteomes" id="UP000291000">
    <property type="component" value="Unassembled WGS sequence"/>
</dbReference>
<dbReference type="Proteomes" id="UP000694566">
    <property type="component" value="Unplaced"/>
</dbReference>
<dbReference type="GO" id="GO:0005737">
    <property type="term" value="C:cytoplasm"/>
    <property type="evidence" value="ECO:0007669"/>
    <property type="project" value="UniProtKB-SubCell"/>
</dbReference>
<dbReference type="GO" id="GO:0005615">
    <property type="term" value="C:extracellular space"/>
    <property type="evidence" value="ECO:0007669"/>
    <property type="project" value="TreeGrafter"/>
</dbReference>
<dbReference type="GO" id="GO:0030395">
    <property type="term" value="F:lactose binding"/>
    <property type="evidence" value="ECO:0007669"/>
    <property type="project" value="TreeGrafter"/>
</dbReference>
<dbReference type="GO" id="GO:0043236">
    <property type="term" value="F:laminin binding"/>
    <property type="evidence" value="ECO:0007669"/>
    <property type="project" value="TreeGrafter"/>
</dbReference>
<dbReference type="GO" id="GO:0006915">
    <property type="term" value="P:apoptotic process"/>
    <property type="evidence" value="ECO:0007669"/>
    <property type="project" value="UniProtKB-KW"/>
</dbReference>
<dbReference type="CDD" id="cd00070">
    <property type="entry name" value="GLECT"/>
    <property type="match status" value="1"/>
</dbReference>
<dbReference type="FunFam" id="2.60.120.200:FF:000021">
    <property type="entry name" value="Galectin"/>
    <property type="match status" value="1"/>
</dbReference>
<dbReference type="Gene3D" id="2.60.120.200">
    <property type="match status" value="1"/>
</dbReference>
<dbReference type="InterPro" id="IPR013320">
    <property type="entry name" value="ConA-like_dom_sf"/>
</dbReference>
<dbReference type="InterPro" id="IPR044156">
    <property type="entry name" value="Galectin-like"/>
</dbReference>
<dbReference type="InterPro" id="IPR001079">
    <property type="entry name" value="Galectin_CRD"/>
</dbReference>
<dbReference type="PANTHER" id="PTHR11346">
    <property type="entry name" value="GALECTIN"/>
    <property type="match status" value="1"/>
</dbReference>
<dbReference type="PANTHER" id="PTHR11346:SF97">
    <property type="entry name" value="GALECTIN-1"/>
    <property type="match status" value="1"/>
</dbReference>
<dbReference type="Pfam" id="PF00337">
    <property type="entry name" value="Gal-bind_lectin"/>
    <property type="match status" value="1"/>
</dbReference>
<dbReference type="SMART" id="SM00908">
    <property type="entry name" value="Gal-bind_lectin"/>
    <property type="match status" value="1"/>
</dbReference>
<dbReference type="SMART" id="SM00276">
    <property type="entry name" value="GLECT"/>
    <property type="match status" value="1"/>
</dbReference>
<dbReference type="SUPFAM" id="SSF49899">
    <property type="entry name" value="Concanavalin A-like lectins/glucanases"/>
    <property type="match status" value="1"/>
</dbReference>
<dbReference type="PROSITE" id="PS51304">
    <property type="entry name" value="GALECTIN"/>
    <property type="match status" value="1"/>
</dbReference>
<reference evidence="6" key="1">
    <citation type="journal article" date="2011" name="Protein J.">
        <title>Purification, characterization, sequencing and biological chemistry of galectin-1 purified from Capra hircus (goat) heart.</title>
        <authorList>
            <person name="Ashraf G.M."/>
            <person name="Banu N."/>
            <person name="Ahmad A."/>
            <person name="Singh L.P."/>
            <person name="Kumar R."/>
        </authorList>
    </citation>
    <scope>PROTEIN SEQUENCE OF 2-135</scope>
    <scope>FUNCTION</scope>
    <scope>BIOPHYSICOCHEMICAL PROPERTIES</scope>
    <scope>SUBUNIT</scope>
    <source>
        <tissue evidence="5">Heart</tissue>
    </source>
</reference>
<gene>
    <name evidence="1" type="primary">LGALS1</name>
</gene>
<evidence type="ECO:0000250" key="1">
    <source>
        <dbReference type="UniProtKB" id="P09382"/>
    </source>
</evidence>
<evidence type="ECO:0000250" key="2">
    <source>
        <dbReference type="UniProtKB" id="P16045"/>
    </source>
</evidence>
<evidence type="ECO:0000255" key="3">
    <source>
        <dbReference type="PROSITE-ProRule" id="PRU00639"/>
    </source>
</evidence>
<evidence type="ECO:0000269" key="4">
    <source>
    </source>
</evidence>
<evidence type="ECO:0000303" key="5">
    <source>
    </source>
</evidence>
<evidence type="ECO:0000305" key="6"/>
<accession>C0HJR3</accession>
<feature type="initiator methionine" description="Removed" evidence="1">
    <location>
        <position position="1"/>
    </location>
</feature>
<feature type="chain" id="PRO_0000432997" description="Galectin-1" evidence="4">
    <location>
        <begin position="2"/>
        <end position="135"/>
    </location>
</feature>
<feature type="domain" description="Galectin" evidence="3">
    <location>
        <begin position="4"/>
        <end position="135"/>
    </location>
</feature>
<feature type="binding site" evidence="1">
    <location>
        <begin position="45"/>
        <end position="49"/>
    </location>
    <ligand>
        <name>a beta-D-galactoside</name>
        <dbReference type="ChEBI" id="CHEBI:28034"/>
    </ligand>
</feature>
<feature type="binding site" evidence="1">
    <location>
        <position position="53"/>
    </location>
    <ligand>
        <name>a beta-D-galactoside</name>
        <dbReference type="ChEBI" id="CHEBI:28034"/>
    </ligand>
</feature>
<feature type="binding site" evidence="1">
    <location>
        <position position="62"/>
    </location>
    <ligand>
        <name>a beta-D-galactoside</name>
        <dbReference type="ChEBI" id="CHEBI:28034"/>
    </ligand>
</feature>
<feature type="binding site" evidence="1">
    <location>
        <begin position="69"/>
        <end position="72"/>
    </location>
    <ligand>
        <name>a beta-D-galactoside</name>
        <dbReference type="ChEBI" id="CHEBI:28034"/>
    </ligand>
</feature>
<feature type="modified residue" description="N-acetylalanine" evidence="1">
    <location>
        <position position="2"/>
    </location>
</feature>
<feature type="modified residue" description="N6-acetyllysine" evidence="2">
    <location>
        <position position="13"/>
    </location>
</feature>
<feature type="modified residue" description="N6-acetyllysine" evidence="1">
    <location>
        <position position="29"/>
    </location>
</feature>
<feature type="modified residue" description="Phosphoserine" evidence="1">
    <location>
        <position position="30"/>
    </location>
</feature>
<feature type="modified residue" description="N6-acetyllysine; alternate" evidence="2">
    <location>
        <position position="108"/>
    </location>
</feature>
<feature type="modified residue" description="N6-succinyllysine; alternate" evidence="2">
    <location>
        <position position="108"/>
    </location>
</feature>
<feature type="modified residue" description="N6-acetyllysine" evidence="2">
    <location>
        <position position="128"/>
    </location>
</feature>
<protein>
    <recommendedName>
        <fullName evidence="5">Galectin-1</fullName>
        <shortName evidence="1">Gal-1</shortName>
    </recommendedName>
    <alternativeName>
        <fullName evidence="1">14 kDa lectin</fullName>
    </alternativeName>
    <alternativeName>
        <fullName evidence="1">Beta-galactoside-binding lectin L-14-I</fullName>
    </alternativeName>
    <alternativeName>
        <fullName evidence="1">Galaptin</fullName>
    </alternativeName>
    <alternativeName>
        <fullName evidence="1">Lactose-binding lectin 1</fullName>
    </alternativeName>
    <alternativeName>
        <fullName evidence="1">Lectin galactoside-binding soluble 1</fullName>
    </alternativeName>
    <alternativeName>
        <fullName evidence="1">S-Lac lectin 1</fullName>
    </alternativeName>
</protein>
<sequence>MACGLVASNLNLKPGECLRVRGELAADAKSFVLNLGKDSNNLCLHFNPRFNAHGDANTIVCNSKDDGTWGAEQREVAFPFQPGSVVEVCISFNQADLTVKLPDGHEFKFPNRLNMEAINYMSADGDFKIKCVAFE</sequence>
<organism>
    <name type="scientific">Capra hircus</name>
    <name type="common">Goat</name>
    <dbReference type="NCBI Taxonomy" id="9925"/>
    <lineage>
        <taxon>Eukaryota</taxon>
        <taxon>Metazoa</taxon>
        <taxon>Chordata</taxon>
        <taxon>Craniata</taxon>
        <taxon>Vertebrata</taxon>
        <taxon>Euteleostomi</taxon>
        <taxon>Mammalia</taxon>
        <taxon>Eutheria</taxon>
        <taxon>Laurasiatheria</taxon>
        <taxon>Artiodactyla</taxon>
        <taxon>Ruminantia</taxon>
        <taxon>Pecora</taxon>
        <taxon>Bovidae</taxon>
        <taxon>Caprinae</taxon>
        <taxon>Capra</taxon>
    </lineage>
</organism>
<proteinExistence type="evidence at protein level"/>